<organism>
    <name type="scientific">Saccharomyces cerevisiae (strain ATCC 204508 / S288c)</name>
    <name type="common">Baker's yeast</name>
    <dbReference type="NCBI Taxonomy" id="559292"/>
    <lineage>
        <taxon>Eukaryota</taxon>
        <taxon>Fungi</taxon>
        <taxon>Dikarya</taxon>
        <taxon>Ascomycota</taxon>
        <taxon>Saccharomycotina</taxon>
        <taxon>Saccharomycetes</taxon>
        <taxon>Saccharomycetales</taxon>
        <taxon>Saccharomycetaceae</taxon>
        <taxon>Saccharomyces</taxon>
    </lineage>
</organism>
<name>OCA6_YEAST</name>
<gene>
    <name type="primary">OCA6</name>
    <name type="ordered locus">YDR067C</name>
    <name type="ORF">D4264</name>
</gene>
<protein>
    <recommendedName>
        <fullName>Putative tyrosine-protein phosphatase OCA6</fullName>
        <ecNumber>3.1.3.48</ecNumber>
    </recommendedName>
    <alternativeName>
        <fullName>Oxidant-induced cell-cycle arrest protein 6</fullName>
    </alternativeName>
</protein>
<accession>Q12454</accession>
<accession>D6VS53</accession>
<accession>Q6Q559</accession>
<reference key="1">
    <citation type="journal article" date="1996" name="Yeast">
        <title>Nucleotide sequence analysis of a 32,500 bp region of the right arm of Saccharomyces cerevisiae chromosome IV.</title>
        <authorList>
            <person name="Brandt P."/>
            <person name="Ramlow S."/>
            <person name="Otto B."/>
            <person name="Bloecker H."/>
        </authorList>
    </citation>
    <scope>NUCLEOTIDE SEQUENCE [GENOMIC DNA]</scope>
</reference>
<reference key="2">
    <citation type="journal article" date="1997" name="Nature">
        <title>The nucleotide sequence of Saccharomyces cerevisiae chromosome IV.</title>
        <authorList>
            <person name="Jacq C."/>
            <person name="Alt-Moerbe J."/>
            <person name="Andre B."/>
            <person name="Arnold W."/>
            <person name="Bahr A."/>
            <person name="Ballesta J.P.G."/>
            <person name="Bargues M."/>
            <person name="Baron L."/>
            <person name="Becker A."/>
            <person name="Biteau N."/>
            <person name="Bloecker H."/>
            <person name="Blugeon C."/>
            <person name="Boskovic J."/>
            <person name="Brandt P."/>
            <person name="Brueckner M."/>
            <person name="Buitrago M.J."/>
            <person name="Coster F."/>
            <person name="Delaveau T."/>
            <person name="del Rey F."/>
            <person name="Dujon B."/>
            <person name="Eide L.G."/>
            <person name="Garcia-Cantalejo J.M."/>
            <person name="Goffeau A."/>
            <person name="Gomez-Peris A."/>
            <person name="Granotier C."/>
            <person name="Hanemann V."/>
            <person name="Hankeln T."/>
            <person name="Hoheisel J.D."/>
            <person name="Jaeger W."/>
            <person name="Jimenez A."/>
            <person name="Jonniaux J.-L."/>
            <person name="Kraemer C."/>
            <person name="Kuester H."/>
            <person name="Laamanen P."/>
            <person name="Legros Y."/>
            <person name="Louis E.J."/>
            <person name="Moeller-Rieker S."/>
            <person name="Monnet A."/>
            <person name="Moro M."/>
            <person name="Mueller-Auer S."/>
            <person name="Nussbaumer B."/>
            <person name="Paricio N."/>
            <person name="Paulin L."/>
            <person name="Perea J."/>
            <person name="Perez-Alonso M."/>
            <person name="Perez-Ortin J.E."/>
            <person name="Pohl T.M."/>
            <person name="Prydz H."/>
            <person name="Purnelle B."/>
            <person name="Rasmussen S.W."/>
            <person name="Remacha M.A."/>
            <person name="Revuelta J.L."/>
            <person name="Rieger M."/>
            <person name="Salom D."/>
            <person name="Saluz H.P."/>
            <person name="Saiz J.E."/>
            <person name="Saren A.-M."/>
            <person name="Schaefer M."/>
            <person name="Scharfe M."/>
            <person name="Schmidt E.R."/>
            <person name="Schneider C."/>
            <person name="Scholler P."/>
            <person name="Schwarz S."/>
            <person name="Soler-Mira A."/>
            <person name="Urrestarazu L.A."/>
            <person name="Verhasselt P."/>
            <person name="Vissers S."/>
            <person name="Voet M."/>
            <person name="Volckaert G."/>
            <person name="Wagner G."/>
            <person name="Wambutt R."/>
            <person name="Wedler E."/>
            <person name="Wedler H."/>
            <person name="Woelfl S."/>
            <person name="Harris D.E."/>
            <person name="Bowman S."/>
            <person name="Brown D."/>
            <person name="Churcher C.M."/>
            <person name="Connor R."/>
            <person name="Dedman K."/>
            <person name="Gentles S."/>
            <person name="Hamlin N."/>
            <person name="Hunt S."/>
            <person name="Jones L."/>
            <person name="McDonald S."/>
            <person name="Murphy L.D."/>
            <person name="Niblett D."/>
            <person name="Odell C."/>
            <person name="Oliver K."/>
            <person name="Rajandream M.A."/>
            <person name="Richards C."/>
            <person name="Shore L."/>
            <person name="Walsh S.V."/>
            <person name="Barrell B.G."/>
            <person name="Dietrich F.S."/>
            <person name="Mulligan J.T."/>
            <person name="Allen E."/>
            <person name="Araujo R."/>
            <person name="Aviles E."/>
            <person name="Berno A."/>
            <person name="Carpenter J."/>
            <person name="Chen E."/>
            <person name="Cherry J.M."/>
            <person name="Chung E."/>
            <person name="Duncan M."/>
            <person name="Hunicke-Smith S."/>
            <person name="Hyman R.W."/>
            <person name="Komp C."/>
            <person name="Lashkari D."/>
            <person name="Lew H."/>
            <person name="Lin D."/>
            <person name="Mosedale D."/>
            <person name="Nakahara K."/>
            <person name="Namath A."/>
            <person name="Oefner P."/>
            <person name="Oh C."/>
            <person name="Petel F.X."/>
            <person name="Roberts D."/>
            <person name="Schramm S."/>
            <person name="Schroeder M."/>
            <person name="Shogren T."/>
            <person name="Shroff N."/>
            <person name="Winant A."/>
            <person name="Yelton M.A."/>
            <person name="Botstein D."/>
            <person name="Davis R.W."/>
            <person name="Johnston M."/>
            <person name="Andrews S."/>
            <person name="Brinkman R."/>
            <person name="Cooper J."/>
            <person name="Ding H."/>
            <person name="Du Z."/>
            <person name="Favello A."/>
            <person name="Fulton L."/>
            <person name="Gattung S."/>
            <person name="Greco T."/>
            <person name="Hallsworth K."/>
            <person name="Hawkins J."/>
            <person name="Hillier L.W."/>
            <person name="Jier M."/>
            <person name="Johnson D."/>
            <person name="Johnston L."/>
            <person name="Kirsten J."/>
            <person name="Kucaba T."/>
            <person name="Langston Y."/>
            <person name="Latreille P."/>
            <person name="Le T."/>
            <person name="Mardis E."/>
            <person name="Menezes S."/>
            <person name="Miller N."/>
            <person name="Nhan M."/>
            <person name="Pauley A."/>
            <person name="Peluso D."/>
            <person name="Rifkin L."/>
            <person name="Riles L."/>
            <person name="Taich A."/>
            <person name="Trevaskis E."/>
            <person name="Vignati D."/>
            <person name="Wilcox L."/>
            <person name="Wohldman P."/>
            <person name="Vaudin M."/>
            <person name="Wilson R."/>
            <person name="Waterston R."/>
            <person name="Albermann K."/>
            <person name="Hani J."/>
            <person name="Heumann K."/>
            <person name="Kleine K."/>
            <person name="Mewes H.-W."/>
            <person name="Zollner A."/>
            <person name="Zaccaria P."/>
        </authorList>
    </citation>
    <scope>NUCLEOTIDE SEQUENCE [LARGE SCALE GENOMIC DNA]</scope>
    <source>
        <strain>ATCC 204508 / S288c</strain>
    </source>
</reference>
<reference key="3">
    <citation type="journal article" date="2014" name="G3 (Bethesda)">
        <title>The reference genome sequence of Saccharomyces cerevisiae: Then and now.</title>
        <authorList>
            <person name="Engel S.R."/>
            <person name="Dietrich F.S."/>
            <person name="Fisk D.G."/>
            <person name="Binkley G."/>
            <person name="Balakrishnan R."/>
            <person name="Costanzo M.C."/>
            <person name="Dwight S.S."/>
            <person name="Hitz B.C."/>
            <person name="Karra K."/>
            <person name="Nash R.S."/>
            <person name="Weng S."/>
            <person name="Wong E.D."/>
            <person name="Lloyd P."/>
            <person name="Skrzypek M.S."/>
            <person name="Miyasato S.R."/>
            <person name="Simison M."/>
            <person name="Cherry J.M."/>
        </authorList>
    </citation>
    <scope>GENOME REANNOTATION</scope>
    <source>
        <strain>ATCC 204508 / S288c</strain>
    </source>
</reference>
<reference key="4">
    <citation type="journal article" date="2007" name="Genome Res.">
        <title>Approaching a complete repository of sequence-verified protein-encoding clones for Saccharomyces cerevisiae.</title>
        <authorList>
            <person name="Hu Y."/>
            <person name="Rolfs A."/>
            <person name="Bhullar B."/>
            <person name="Murthy T.V.S."/>
            <person name="Zhu C."/>
            <person name="Berger M.F."/>
            <person name="Camargo A.A."/>
            <person name="Kelley F."/>
            <person name="McCarron S."/>
            <person name="Jepson D."/>
            <person name="Richardson A."/>
            <person name="Raphael J."/>
            <person name="Moreira D."/>
            <person name="Taycher E."/>
            <person name="Zuo D."/>
            <person name="Mohr S."/>
            <person name="Kane M.F."/>
            <person name="Williamson J."/>
            <person name="Simpson A.J.G."/>
            <person name="Bulyk M.L."/>
            <person name="Harlow E."/>
            <person name="Marsischky G."/>
            <person name="Kolodner R.D."/>
            <person name="LaBaer J."/>
        </authorList>
    </citation>
    <scope>NUCLEOTIDE SEQUENCE [GENOMIC DNA]</scope>
    <source>
        <strain>ATCC 204508 / S288c</strain>
    </source>
</reference>
<reference key="5">
    <citation type="journal article" date="2003" name="Nature">
        <title>Global analysis of protein localization in budding yeast.</title>
        <authorList>
            <person name="Huh W.-K."/>
            <person name="Falvo J.V."/>
            <person name="Gerke L.C."/>
            <person name="Carroll A.S."/>
            <person name="Howson R.W."/>
            <person name="Weissman J.S."/>
            <person name="O'Shea E.K."/>
        </authorList>
    </citation>
    <scope>SUBCELLULAR LOCATION [LARGE SCALE ANALYSIS]</scope>
</reference>
<reference key="6">
    <citation type="journal article" date="2003" name="Proc. Natl. Acad. Sci. U.S.A.">
        <title>Systematic, genome-wide identification of host genes affecting replication of a positive-strand RNA virus.</title>
        <authorList>
            <person name="Kushner D.B."/>
            <person name="Lindenbach B.D."/>
            <person name="Grdzelishvili V.Z."/>
            <person name="Noueiry A.O."/>
            <person name="Paul S.M."/>
            <person name="Ahlquist P."/>
        </authorList>
    </citation>
    <scope>FUNCTION</scope>
</reference>
<reference key="7">
    <citation type="journal article" date="2008" name="Mol. Cell. Proteomics">
        <title>A multidimensional chromatography technology for in-depth phosphoproteome analysis.</title>
        <authorList>
            <person name="Albuquerque C.P."/>
            <person name="Smolka M.B."/>
            <person name="Payne S.H."/>
            <person name="Bafna V."/>
            <person name="Eng J."/>
            <person name="Zhou H."/>
        </authorList>
    </citation>
    <scope>PHOSPHORYLATION [LARGE SCALE ANALYSIS] AT THR-2</scope>
    <scope>IDENTIFICATION BY MASS SPECTROMETRY [LARGE SCALE ANALYSIS]</scope>
</reference>
<sequence length="224" mass="26024">MTLVTPLQFSTVQPNLYRGSYPREINLPFLRTLRLKYILSLTPEPLSTDPLMVKFCEENNIKTIHIKCQSERKADKTKPKIKRKKKTVPIEYDVVVRCVKFLIDKGHYPCYMHCTNGELIISLVVACMRKFSYWSTVSILNEFLVYNSSINIHERNFIENFNSEIEVDDLDIKDKVPWITVRYIARTATESKDELRVDDANASEKVARVSSVSNSLPKLKFHSM</sequence>
<dbReference type="EC" id="3.1.3.48"/>
<dbReference type="EMBL" id="X84162">
    <property type="protein sequence ID" value="CAA58983.1"/>
    <property type="molecule type" value="Genomic_DNA"/>
</dbReference>
<dbReference type="EMBL" id="Z49209">
    <property type="protein sequence ID" value="CAA89096.1"/>
    <property type="molecule type" value="Genomic_DNA"/>
</dbReference>
<dbReference type="EMBL" id="Z74363">
    <property type="protein sequence ID" value="CAA98885.1"/>
    <property type="molecule type" value="Genomic_DNA"/>
</dbReference>
<dbReference type="EMBL" id="AY558491">
    <property type="protein sequence ID" value="AAS56817.1"/>
    <property type="molecule type" value="Genomic_DNA"/>
</dbReference>
<dbReference type="EMBL" id="BK006938">
    <property type="protein sequence ID" value="DAA11913.1"/>
    <property type="molecule type" value="Genomic_DNA"/>
</dbReference>
<dbReference type="PIR" id="S54051">
    <property type="entry name" value="S54051"/>
</dbReference>
<dbReference type="RefSeq" id="NP_010352.1">
    <property type="nucleotide sequence ID" value="NM_001180375.1"/>
</dbReference>
<dbReference type="SMR" id="Q12454"/>
<dbReference type="BioGRID" id="32122">
    <property type="interactions" value="241"/>
</dbReference>
<dbReference type="DIP" id="DIP-5466N"/>
<dbReference type="FunCoup" id="Q12454">
    <property type="interactions" value="31"/>
</dbReference>
<dbReference type="IntAct" id="Q12454">
    <property type="interactions" value="7"/>
</dbReference>
<dbReference type="STRING" id="4932.YDR067C"/>
<dbReference type="iPTMnet" id="Q12454"/>
<dbReference type="PaxDb" id="4932-YDR067C"/>
<dbReference type="PeptideAtlas" id="Q12454"/>
<dbReference type="TopDownProteomics" id="Q12454"/>
<dbReference type="EnsemblFungi" id="YDR067C_mRNA">
    <property type="protein sequence ID" value="YDR067C"/>
    <property type="gene ID" value="YDR067C"/>
</dbReference>
<dbReference type="GeneID" id="851639"/>
<dbReference type="KEGG" id="sce:YDR067C"/>
<dbReference type="AGR" id="SGD:S000002474"/>
<dbReference type="SGD" id="S000002474">
    <property type="gene designation" value="OCA6"/>
</dbReference>
<dbReference type="VEuPathDB" id="FungiDB:YDR067C"/>
<dbReference type="eggNOG" id="KOG1572">
    <property type="taxonomic scope" value="Eukaryota"/>
</dbReference>
<dbReference type="GeneTree" id="ENSGT00940000176301"/>
<dbReference type="HOGENOM" id="CLU_047845_4_0_1"/>
<dbReference type="InParanoid" id="Q12454"/>
<dbReference type="OMA" id="HYPCYIH"/>
<dbReference type="OrthoDB" id="6375174at2759"/>
<dbReference type="BioCyc" id="YEAST:G3O-29674-MONOMER"/>
<dbReference type="BioGRID-ORCS" id="851639">
    <property type="hits" value="0 hits in 10 CRISPR screens"/>
</dbReference>
<dbReference type="PRO" id="PR:Q12454"/>
<dbReference type="Proteomes" id="UP000002311">
    <property type="component" value="Chromosome IV"/>
</dbReference>
<dbReference type="RNAct" id="Q12454">
    <property type="molecule type" value="protein"/>
</dbReference>
<dbReference type="GO" id="GO:0005737">
    <property type="term" value="C:cytoplasm"/>
    <property type="evidence" value="ECO:0007005"/>
    <property type="project" value="SGD"/>
</dbReference>
<dbReference type="GO" id="GO:0016791">
    <property type="term" value="F:phosphatase activity"/>
    <property type="evidence" value="ECO:0000318"/>
    <property type="project" value="GO_Central"/>
</dbReference>
<dbReference type="GO" id="GO:0004725">
    <property type="term" value="F:protein tyrosine phosphatase activity"/>
    <property type="evidence" value="ECO:0007669"/>
    <property type="project" value="UniProtKB-EC"/>
</dbReference>
<dbReference type="CDD" id="cd17663">
    <property type="entry name" value="PFA-DSP_Oca6"/>
    <property type="match status" value="1"/>
</dbReference>
<dbReference type="FunFam" id="3.90.190.10:FF:000084">
    <property type="entry name" value="Tyrosine phospatase-like protein"/>
    <property type="match status" value="1"/>
</dbReference>
<dbReference type="Gene3D" id="3.90.190.10">
    <property type="entry name" value="Protein tyrosine phosphatase superfamily"/>
    <property type="match status" value="1"/>
</dbReference>
<dbReference type="InterPro" id="IPR029021">
    <property type="entry name" value="Prot-tyrosine_phosphatase-like"/>
</dbReference>
<dbReference type="InterPro" id="IPR004861">
    <property type="entry name" value="Siw14-like"/>
</dbReference>
<dbReference type="InterPro" id="IPR020422">
    <property type="entry name" value="TYR_PHOSPHATASE_DUAL_dom"/>
</dbReference>
<dbReference type="PANTHER" id="PTHR31126">
    <property type="entry name" value="TYROSINE-PROTEIN PHOSPHATASE"/>
    <property type="match status" value="1"/>
</dbReference>
<dbReference type="PANTHER" id="PTHR31126:SF14">
    <property type="entry name" value="TYROSINE-PROTEIN PHOSPHATASE OCA6-RELATED"/>
    <property type="match status" value="1"/>
</dbReference>
<dbReference type="Pfam" id="PF03162">
    <property type="entry name" value="Y_phosphatase2"/>
    <property type="match status" value="1"/>
</dbReference>
<dbReference type="SUPFAM" id="SSF52799">
    <property type="entry name" value="(Phosphotyrosine protein) phosphatases II"/>
    <property type="match status" value="1"/>
</dbReference>
<dbReference type="PROSITE" id="PS50054">
    <property type="entry name" value="TYR_PHOSPHATASE_DUAL"/>
    <property type="match status" value="1"/>
</dbReference>
<keyword id="KW-0963">Cytoplasm</keyword>
<keyword id="KW-0378">Hydrolase</keyword>
<keyword id="KW-0597">Phosphoprotein</keyword>
<keyword id="KW-0904">Protein phosphatase</keyword>
<keyword id="KW-1185">Reference proteome</keyword>
<evidence type="ECO:0000255" key="1">
    <source>
        <dbReference type="PROSITE-ProRule" id="PRU00160"/>
    </source>
</evidence>
<evidence type="ECO:0000269" key="2">
    <source>
    </source>
</evidence>
<evidence type="ECO:0000269" key="3">
    <source>
    </source>
</evidence>
<evidence type="ECO:0000305" key="4"/>
<evidence type="ECO:0007744" key="5">
    <source>
    </source>
</evidence>
<feature type="chain" id="PRO_0000244442" description="Putative tyrosine-protein phosphatase OCA6">
    <location>
        <begin position="1"/>
        <end position="224"/>
    </location>
</feature>
<feature type="domain" description="Tyrosine-protein phosphatase" evidence="1">
    <location>
        <begin position="8"/>
        <end position="170"/>
    </location>
</feature>
<feature type="active site" description="Phosphocysteine intermediate" evidence="1">
    <location>
        <position position="114"/>
    </location>
</feature>
<feature type="modified residue" description="Phosphothreonine" evidence="5">
    <location>
        <position position="2"/>
    </location>
</feature>
<feature type="sequence conflict" description="In Ref. 2; AAS56817." evidence="4" ref="2">
    <original>R</original>
    <variation>G</variation>
    <location>
        <position position="208"/>
    </location>
</feature>
<comment type="function">
    <text evidence="3">Required for replication of Brome mosaic virus (BMV).</text>
</comment>
<comment type="catalytic activity">
    <reaction>
        <text>O-phospho-L-tyrosyl-[protein] + H2O = L-tyrosyl-[protein] + phosphate</text>
        <dbReference type="Rhea" id="RHEA:10684"/>
        <dbReference type="Rhea" id="RHEA-COMP:10136"/>
        <dbReference type="Rhea" id="RHEA-COMP:20101"/>
        <dbReference type="ChEBI" id="CHEBI:15377"/>
        <dbReference type="ChEBI" id="CHEBI:43474"/>
        <dbReference type="ChEBI" id="CHEBI:46858"/>
        <dbReference type="ChEBI" id="CHEBI:61978"/>
        <dbReference type="EC" id="3.1.3.48"/>
    </reaction>
</comment>
<comment type="subcellular location">
    <subcellularLocation>
        <location evidence="2">Cytoplasm</location>
    </subcellularLocation>
</comment>
<comment type="similarity">
    <text evidence="4">Belongs to the protein-tyrosine phosphatase family.</text>
</comment>
<proteinExistence type="evidence at protein level"/>